<organismHost>
    <name type="scientific">Aves</name>
    <dbReference type="NCBI Taxonomy" id="8782"/>
</organismHost>
<organismHost>
    <name type="scientific">Homo sapiens</name>
    <name type="common">Human</name>
    <dbReference type="NCBI Taxonomy" id="9606"/>
</organismHost>
<organismHost>
    <name type="scientific">Sus scrofa</name>
    <name type="common">Pig</name>
    <dbReference type="NCBI Taxonomy" id="9823"/>
</organismHost>
<name>NCAP_I34A1</name>
<organism>
    <name type="scientific">Influenza A virus (strain A/Puerto Rico/8/1934 H1N1)</name>
    <dbReference type="NCBI Taxonomy" id="211044"/>
    <lineage>
        <taxon>Viruses</taxon>
        <taxon>Riboviria</taxon>
        <taxon>Orthornavirae</taxon>
        <taxon>Negarnaviricota</taxon>
        <taxon>Polyploviricotina</taxon>
        <taxon>Insthoviricetes</taxon>
        <taxon>Articulavirales</taxon>
        <taxon>Orthomyxoviridae</taxon>
        <taxon>Alphainfluenzavirus</taxon>
        <taxon>Alphainfluenzavirus influenzae</taxon>
        <taxon>Influenza A virus</taxon>
    </lineage>
</organism>
<comment type="function">
    <text evidence="1">Encapsidates the negative strand viral RNA, protecting it from nucleases. The encapsidated genomic RNA is termed the ribonucleoprotein (RNP) and serves as template for transcription and replication. The RNP needs to be localized in the host nucleus to start an infectious cycle, but is too large to diffuse through the nuclear pore complex. NP comprises at least 2 nuclear localization signals that are responsible for the active RNP import into the nucleus through cellular importin alpha/beta pathway. Later in the infection, nclear export of RNPs are mediated through viral proteins NEP interacting with M1 which binds nucleoproteins. It is possible that nucleoprotein binds directly host exportin-1/XPO1 and plays an active role in RNPs nuclear export. M1 interaction with RNP seems to hide nucleoprotein's nuclear localization signals. Soon after a virion infects a new cell, M1 dissociates from the RNP under acidification of the virion driven by M2 protein. Dissociation of M1 from RNP unmasks nucleoprotein's nuclear localization signals, targeting the RNP to the nucleus.</text>
</comment>
<comment type="subunit">
    <text evidence="1 3">Homomultimerizes to form the nucleocapsid. May bind host exportin-1/XPO1. Binds to viral genomic RNA. Protein-RNA contacts are mediated by a combination of electrostatic interactions between positively charged residues and the phosphate backbone and planar interactions between aromatic side chains and bases.</text>
</comment>
<comment type="interaction">
    <interactant intactId="EBI-2547640">
        <id>P03466</id>
    </interactant>
    <interactant intactId="EBI-2547543">
        <id>P03485</id>
        <label>M</label>
    </interactant>
    <organismsDiffer>false</organismsDiffer>
    <experiments>2</experiments>
</comment>
<comment type="interaction">
    <interactant intactId="EBI-2547640">
        <id>P03466</id>
    </interactant>
    <interactant intactId="EBI-2547640">
        <id>P03466</id>
        <label>NP</label>
    </interactant>
    <organismsDiffer>false</organismsDiffer>
    <experiments>2</experiments>
</comment>
<comment type="interaction">
    <interactant intactId="EBI-2547640">
        <id>P03466</id>
    </interactant>
    <interactant intactId="EBI-2547616">
        <id>P03433</id>
        <label>PA</label>
    </interactant>
    <organismsDiffer>false</organismsDiffer>
    <experiments>3</experiments>
</comment>
<comment type="interaction">
    <interactant intactId="EBI-2547640">
        <id>P03466</id>
    </interactant>
    <interactant intactId="EBI-2547514">
        <id>P03431</id>
        <label>PB1</label>
    </interactant>
    <organismsDiffer>false</organismsDiffer>
    <experiments>5</experiments>
</comment>
<comment type="interaction">
    <interactant intactId="EBI-2547640">
        <id>P03466</id>
    </interactant>
    <interactant intactId="EBI-2547475">
        <id>P03428</id>
        <label>PB2</label>
    </interactant>
    <organismsDiffer>false</organismsDiffer>
    <experiments>3</experiments>
</comment>
<comment type="interaction">
    <interactant intactId="EBI-2547640">
        <id>P03466</id>
    </interactant>
    <interactant intactId="EBI-351526">
        <id>O43707</id>
        <label>ACTN4</label>
    </interactant>
    <organismsDiffer>true</organismsDiffer>
    <experiments>2</experiments>
</comment>
<comment type="interaction">
    <interactant intactId="EBI-2547640">
        <id>P03466</id>
    </interactant>
    <interactant intactId="EBI-359923">
        <id>O60684</id>
        <label>KPNA6</label>
    </interactant>
    <organismsDiffer>true</organismsDiffer>
    <experiments>5</experiments>
</comment>
<comment type="interaction">
    <interactant intactId="EBI-2547640">
        <id>P03466</id>
    </interactant>
    <interactant intactId="EBI-725997">
        <id>Q8WV44</id>
        <label>TRIM41</label>
    </interactant>
    <organismsDiffer>true</organismsDiffer>
    <experiments>5</experiments>
</comment>
<comment type="subcellular location">
    <subcellularLocation>
        <location evidence="1">Virion</location>
    </subcellularLocation>
    <subcellularLocation>
        <location evidence="1 5 6">Host nucleus</location>
    </subcellularLocation>
</comment>
<comment type="PTM">
    <text evidence="1">Late in virus-infected cells, may be cleaved from a 56-kDa protein to a 53-kDa protein by a cellular caspase. This cleavage might be a marker for the onset of apoptosis in infected cells or have a specific function in virus host interaction.</text>
</comment>
<comment type="similarity">
    <text evidence="1">Belongs to the influenza viruses nucleoprotein family.</text>
</comment>
<evidence type="ECO:0000255" key="1">
    <source>
        <dbReference type="HAMAP-Rule" id="MF_04070"/>
    </source>
</evidence>
<evidence type="ECO:0000256" key="2">
    <source>
        <dbReference type="SAM" id="MobiDB-lite"/>
    </source>
</evidence>
<evidence type="ECO:0000269" key="3">
    <source>
    </source>
</evidence>
<evidence type="ECO:0000269" key="4">
    <source>
    </source>
</evidence>
<evidence type="ECO:0000269" key="5">
    <source>
    </source>
</evidence>
<evidence type="ECO:0000269" key="6">
    <source>
    </source>
</evidence>
<evidence type="ECO:0007829" key="7">
    <source>
        <dbReference type="PDB" id="4ZDU"/>
    </source>
</evidence>
<dbReference type="EMBL" id="V01084">
    <property type="protein sequence ID" value="CAA24268.1"/>
    <property type="molecule type" value="Genomic_RNA"/>
</dbReference>
<dbReference type="EMBL" id="J02147">
    <property type="protein sequence ID" value="AAA43467.1"/>
    <property type="molecule type" value="Genomic_RNA"/>
</dbReference>
<dbReference type="EMBL" id="AF389119">
    <property type="protein sequence ID" value="AAM75159.1"/>
    <property type="molecule type" value="Genomic_RNA"/>
</dbReference>
<dbReference type="EMBL" id="EF467822">
    <property type="protein sequence ID" value="ABO21710.1"/>
    <property type="molecule type" value="Genomic_RNA"/>
</dbReference>
<dbReference type="EMBL" id="AY936882">
    <property type="protein sequence ID" value="AAX39501.1"/>
    <property type="molecule type" value="Genomic_RNA"/>
</dbReference>
<dbReference type="EMBL" id="CY009447">
    <property type="protein sequence ID" value="ABD77679.1"/>
    <property type="molecule type" value="Genomic_RNA"/>
</dbReference>
<dbReference type="RefSeq" id="NP_040982.1">
    <property type="nucleotide sequence ID" value="NC_002019.1"/>
</dbReference>
<dbReference type="PDB" id="2BST">
    <property type="method" value="X-ray"/>
    <property type="resolution" value="2.10 A"/>
    <property type="chains" value="C=383-391"/>
</dbReference>
<dbReference type="PDB" id="2WFS">
    <property type="method" value="EM"/>
    <property type="resolution" value="12.00 A"/>
    <property type="chains" value="A/B/C/D/E/F/G/H/I=8-498"/>
</dbReference>
<dbReference type="PDB" id="4NQV">
    <property type="method" value="X-ray"/>
    <property type="resolution" value="2.39 A"/>
    <property type="chains" value="M/N/O/P/Q/R=44-52"/>
</dbReference>
<dbReference type="PDB" id="4ZDU">
    <property type="method" value="X-ray"/>
    <property type="resolution" value="2.30 A"/>
    <property type="chains" value="B=2-15"/>
</dbReference>
<dbReference type="PDB" id="5NPZ">
    <property type="method" value="X-ray"/>
    <property type="resolution" value="1.43 A"/>
    <property type="chains" value="C=252-260"/>
</dbReference>
<dbReference type="PDB" id="5NQ3">
    <property type="method" value="X-ray"/>
    <property type="resolution" value="1.57 A"/>
    <property type="chains" value="C/F=252-260"/>
</dbReference>
<dbReference type="PDB" id="5V5O">
    <property type="method" value="X-ray"/>
    <property type="resolution" value="2.24 A"/>
    <property type="chains" value="A/B=198-216"/>
</dbReference>
<dbReference type="PDBsum" id="2BST"/>
<dbReference type="PDBsum" id="2WFS"/>
<dbReference type="PDBsum" id="4NQV"/>
<dbReference type="PDBsum" id="4ZDU"/>
<dbReference type="PDBsum" id="5NPZ"/>
<dbReference type="PDBsum" id="5NQ3"/>
<dbReference type="PDBsum" id="5V5O"/>
<dbReference type="EMDB" id="EMD-1603"/>
<dbReference type="SMR" id="P03466"/>
<dbReference type="DIP" id="DIP-43998N"/>
<dbReference type="IntAct" id="P03466">
    <property type="interactions" value="150"/>
</dbReference>
<dbReference type="MINT" id="P03466"/>
<dbReference type="ABCD" id="P03466">
    <property type="antibodies" value="6 sequenced antibodies"/>
</dbReference>
<dbReference type="GeneID" id="956531"/>
<dbReference type="KEGG" id="vg:956531"/>
<dbReference type="OrthoDB" id="1815at10239"/>
<dbReference type="Reactome" id="R-HSA-168255">
    <property type="pathway name" value="Influenza Infection"/>
</dbReference>
<dbReference type="Reactome" id="R-HSA-168271">
    <property type="pathway name" value="Transport of Ribonucleoproteins into the Host Nucleus"/>
</dbReference>
<dbReference type="Reactome" id="R-HSA-168275">
    <property type="pathway name" value="Entry of Influenza Virion into Host Cell via Endocytosis"/>
</dbReference>
<dbReference type="Reactome" id="R-HSA-168288">
    <property type="pathway name" value="Fusion of the Influenza Virion to the Host Cell Endosome"/>
</dbReference>
<dbReference type="Reactome" id="R-HSA-168298">
    <property type="pathway name" value="Release"/>
</dbReference>
<dbReference type="Reactome" id="R-HSA-168302">
    <property type="pathway name" value="Budding"/>
</dbReference>
<dbReference type="Reactome" id="R-HSA-168303">
    <property type="pathway name" value="Packaging of Eight RNA Segments"/>
</dbReference>
<dbReference type="Reactome" id="R-HSA-168316">
    <property type="pathway name" value="Assembly of Viral Components at the Budding Site"/>
</dbReference>
<dbReference type="Reactome" id="R-HSA-168325">
    <property type="pathway name" value="Viral Messenger RNA Synthesis"/>
</dbReference>
<dbReference type="Reactome" id="R-HSA-168330">
    <property type="pathway name" value="Viral RNP Complexes in the Host Cell Nucleus"/>
</dbReference>
<dbReference type="Reactome" id="R-HSA-168333">
    <property type="pathway name" value="NEP/NS2 Interacts with the Cellular Export Machinery"/>
</dbReference>
<dbReference type="Reactome" id="R-HSA-168336">
    <property type="pathway name" value="Uncoating of the Influenza Virion"/>
</dbReference>
<dbReference type="Reactome" id="R-HSA-192814">
    <property type="pathway name" value="vRNA Synthesis"/>
</dbReference>
<dbReference type="Reactome" id="R-HSA-192823">
    <property type="pathway name" value="Viral mRNA Translation"/>
</dbReference>
<dbReference type="Reactome" id="R-HSA-192869">
    <property type="pathway name" value="cRNA Synthesis"/>
</dbReference>
<dbReference type="Reactome" id="R-HSA-192905">
    <property type="pathway name" value="vRNP Assembly"/>
</dbReference>
<dbReference type="EvolutionaryTrace" id="P03466"/>
<dbReference type="PRO" id="PR:P03466"/>
<dbReference type="Proteomes" id="UP000009255">
    <property type="component" value="Genome"/>
</dbReference>
<dbReference type="Proteomes" id="UP000116373">
    <property type="component" value="Genome"/>
</dbReference>
<dbReference type="Proteomes" id="UP000170967">
    <property type="component" value="Genome"/>
</dbReference>
<dbReference type="GO" id="GO:0005576">
    <property type="term" value="C:extracellular region"/>
    <property type="evidence" value="ECO:0000304"/>
    <property type="project" value="Reactome"/>
</dbReference>
<dbReference type="GO" id="GO:0019029">
    <property type="term" value="C:helical viral capsid"/>
    <property type="evidence" value="ECO:0007669"/>
    <property type="project" value="UniProtKB-UniRule"/>
</dbReference>
<dbReference type="GO" id="GO:0043657">
    <property type="term" value="C:host cell"/>
    <property type="evidence" value="ECO:0007669"/>
    <property type="project" value="GOC"/>
</dbReference>
<dbReference type="GO" id="GO:0042025">
    <property type="term" value="C:host cell nucleus"/>
    <property type="evidence" value="ECO:0000314"/>
    <property type="project" value="UniProtKB"/>
</dbReference>
<dbReference type="GO" id="GO:0005886">
    <property type="term" value="C:plasma membrane"/>
    <property type="evidence" value="ECO:0000304"/>
    <property type="project" value="Reactome"/>
</dbReference>
<dbReference type="GO" id="GO:1990904">
    <property type="term" value="C:ribonucleoprotein complex"/>
    <property type="evidence" value="ECO:0007669"/>
    <property type="project" value="UniProtKB-KW"/>
</dbReference>
<dbReference type="GO" id="GO:0019013">
    <property type="term" value="C:viral nucleocapsid"/>
    <property type="evidence" value="ECO:0007669"/>
    <property type="project" value="UniProtKB-UniRule"/>
</dbReference>
<dbReference type="GO" id="GO:0042802">
    <property type="term" value="F:identical protein binding"/>
    <property type="evidence" value="ECO:0000353"/>
    <property type="project" value="IntAct"/>
</dbReference>
<dbReference type="GO" id="GO:0003723">
    <property type="term" value="F:RNA binding"/>
    <property type="evidence" value="ECO:0007669"/>
    <property type="project" value="UniProtKB-UniRule"/>
</dbReference>
<dbReference type="GO" id="GO:0005198">
    <property type="term" value="F:structural molecule activity"/>
    <property type="evidence" value="ECO:0007669"/>
    <property type="project" value="UniProtKB-UniRule"/>
</dbReference>
<dbReference type="GO" id="GO:0046718">
    <property type="term" value="P:symbiont entry into host cell"/>
    <property type="evidence" value="ECO:0007669"/>
    <property type="project" value="UniProtKB-KW"/>
</dbReference>
<dbReference type="GO" id="GO:0075732">
    <property type="term" value="P:viral penetration into host nucleus"/>
    <property type="evidence" value="ECO:0007669"/>
    <property type="project" value="UniProtKB-UniRule"/>
</dbReference>
<dbReference type="HAMAP" id="MF_04070">
    <property type="entry name" value="INFV_NCAP"/>
    <property type="match status" value="1"/>
</dbReference>
<dbReference type="InterPro" id="IPR002141">
    <property type="entry name" value="Flu_NP"/>
</dbReference>
<dbReference type="Pfam" id="PF00506">
    <property type="entry name" value="Flu_NP"/>
    <property type="match status" value="1"/>
</dbReference>
<dbReference type="SUPFAM" id="SSF161003">
    <property type="entry name" value="flu NP-like"/>
    <property type="match status" value="1"/>
</dbReference>
<accession>P03466</accession>
<accession>Q20N34</accession>
<accession>Q58NB3</accession>
<accession>Q67228</accession>
<accession>Q80AB4</accession>
<reference key="1">
    <citation type="journal article" date="1981" name="Virology">
        <title>The structure of the gene encoding the nucleoprotein of human influenza virus A/PR/8/34.</title>
        <authorList>
            <person name="Winter G."/>
            <person name="Fields S."/>
        </authorList>
    </citation>
    <scope>NUCLEOTIDE SEQUENCE [GENOMIC RNA]</scope>
</reference>
<reference key="2">
    <citation type="journal article" date="1981" name="Eur. J. Biochem.">
        <title>Complete nucleotide sequence of the nucleoprotein gene from the human influenza strain A/PR/8/34 (HON1).</title>
        <authorList>
            <person name="van Rompuy L."/>
            <person name="Min Jou W."/>
            <person name="Huylebroeck D."/>
            <person name="Devos R."/>
            <person name="Fiers W."/>
        </authorList>
    </citation>
    <scope>NUCLEOTIDE SEQUENCE [GENOMIC RNA]</scope>
</reference>
<reference key="3">
    <citation type="journal article" date="1981" name="Eur. J. Biochem.">
        <authorList>
            <person name="van Rompuy L."/>
            <person name="Min Jou W."/>
            <person name="Huylebroeck D."/>
            <person name="Devos R."/>
            <person name="Fiers W."/>
        </authorList>
    </citation>
    <scope>ERRATUM OF PUBMED:6166474</scope>
    <scope>SEQUENCE REVISION</scope>
</reference>
<reference key="4">
    <citation type="journal article" date="2001" name="Philos. Trans. R. Soc. Lond., B, Biol. Sci.">
        <title>Plasmid-only rescue of influenza A virus vaccine candidates.</title>
        <authorList>
            <person name="Schickli J.H."/>
            <person name="Flandorfer A."/>
            <person name="Nakaya T."/>
            <person name="Martinez-Sobrido L."/>
            <person name="Garcia-Sastre A."/>
            <person name="Palese P."/>
        </authorList>
    </citation>
    <scope>NUCLEOTIDE SEQUENCE [GENOMIC RNA]</scope>
</reference>
<reference key="5">
    <citation type="journal article" date="2004" name="Virus Res.">
        <title>Efficient generation and growth of influenza virus A/PR/8/34 from eight cDNA fragments.</title>
        <authorList>
            <person name="de Wit E."/>
            <person name="Spronken M.I.J."/>
            <person name="Bestebroer T.M."/>
            <person name="Rimmelzwaan G.F."/>
            <person name="Osterhaus A.D.M.E."/>
            <person name="Fouchier R.A.M."/>
        </authorList>
    </citation>
    <scope>NUCLEOTIDE SEQUENCE [GENOMIC RNA]</scope>
    <scope>REVERSE GENETICS</scope>
</reference>
<reference key="6">
    <citation type="journal article" date="2005" name="J. Infect. Dis.">
        <title>Fluorescent antigen-transfected target cell cytotoxic T lymphocyte assay for ex vivo detection of antigen-specific cell-mediated cytotoxicity.</title>
        <authorList>
            <person name="van Baalen C.A."/>
            <person name="Kwa D."/>
            <person name="Verschuren E.J."/>
            <person name="Reedijk M.L."/>
            <person name="Boon A.C."/>
            <person name="de Mutsert G."/>
            <person name="Rimmelzwaan G.F."/>
            <person name="Osterhaus A.D."/>
            <person name="Gruters R.A."/>
        </authorList>
    </citation>
    <scope>NUCLEOTIDE SEQUENCE [GENOMIC RNA]</scope>
</reference>
<reference key="7">
    <citation type="submission" date="2006-03" db="EMBL/GenBank/DDBJ databases">
        <title>The NIAID influenza genome sequencing project.</title>
        <authorList>
            <person name="Ghedin E."/>
            <person name="Spiro D."/>
            <person name="Miller N."/>
            <person name="Zaborsky J."/>
            <person name="Feldblyum T."/>
            <person name="Subbu V."/>
            <person name="Shumway M."/>
            <person name="Sparenborg J."/>
            <person name="Groveman L."/>
            <person name="Halpin R."/>
            <person name="Sitz J."/>
            <person name="Koo H."/>
            <person name="Salzberg S.L."/>
            <person name="Webster R.G."/>
            <person name="Hoffmann E."/>
            <person name="Krauss S."/>
            <person name="Naeve C."/>
            <person name="Bao Y."/>
            <person name="Bolotov P."/>
            <person name="Dernovoy D."/>
            <person name="Kiryutin B."/>
            <person name="Lipman D.J."/>
            <person name="Tatusova T."/>
        </authorList>
    </citation>
    <scope>NUCLEOTIDE SEQUENCE [GENOMIC RNA]</scope>
</reference>
<reference key="8">
    <citation type="journal article" date="1998" name="Virology">
        <title>A classical bipartite nuclear localization signal on Thogoto and influenza A virus nucleoproteins.</title>
        <authorList>
            <person name="Weber F."/>
            <person name="Kochs G."/>
            <person name="Gruber S."/>
            <person name="Haller O."/>
        </authorList>
    </citation>
    <scope>SUBCELLULAR LOCATION</scope>
</reference>
<reference key="9">
    <citation type="journal article" date="1999" name="J. Virol.">
        <title>Modulation of nuclear localization of the influenza virus nucleoprotein through interaction with actin filaments.</title>
        <authorList>
            <person name="Digard P."/>
            <person name="Elton D."/>
            <person name="Bishop K."/>
            <person name="Medcalf E."/>
            <person name="Weeds A."/>
            <person name="Pope B."/>
        </authorList>
    </citation>
    <scope>SUBCELLULAR LOCATION</scope>
</reference>
<reference key="10">
    <citation type="journal article" date="1999" name="Virology">
        <title>Oligomerization of the influenza virus nucleoprotein: identification of positive and negative sequence elements.</title>
        <authorList>
            <person name="Elton D."/>
            <person name="Medcalf E."/>
            <person name="Bishop K."/>
            <person name="Digard P."/>
        </authorList>
    </citation>
    <scope>SUBUNIT</scope>
    <scope>MUTAGENESIS OF ARG-199; ARG-416 AND PHE-479</scope>
</reference>
<reference key="11">
    <citation type="journal article" date="1999" name="J. Virol.">
        <title>Identification of amino acid residues of influenza virus nucleoprotein essential for RNA binding.</title>
        <authorList>
            <person name="Elton D."/>
            <person name="Medcalf L."/>
            <person name="Bishop K."/>
            <person name="Harrison D."/>
            <person name="Digard P."/>
        </authorList>
    </citation>
    <scope>RNA-BINDING</scope>
    <scope>MUTAGENESIS OF ARG-8; TRP-104; TRP-120; TRP-139; TYR-148; ARG-150; ARG-156; ARG-175; ARG-199; ARG-204; TRP-207; ARG-208; ARG-213; ARG-267; TRP-330; TRP-386; ARG-391; PHE-412 AND ARG-416</scope>
</reference>
<reference key="12">
    <citation type="journal article" date="2001" name="J. Virol.">
        <title>Interaction of the influenza virus nucleoprotein with the cellular CRM1-mediated nuclear export pathway.</title>
        <authorList>
            <person name="Elton D."/>
            <person name="Simpson-Holley M."/>
            <person name="Archer K."/>
            <person name="Medcalf L."/>
            <person name="Hallam R."/>
            <person name="McCauley J."/>
            <person name="Digard P."/>
        </authorList>
    </citation>
    <scope>INTERACTION WITH HUMAN XPO1</scope>
</reference>
<protein>
    <recommendedName>
        <fullName evidence="1">Nucleoprotein</fullName>
    </recommendedName>
    <alternativeName>
        <fullName evidence="1">Nucleocapsid protein</fullName>
        <shortName evidence="1">Protein N</shortName>
    </alternativeName>
</protein>
<gene>
    <name evidence="1" type="primary">NP</name>
</gene>
<feature type="chain" id="PRO_0000079092" description="Nucleoprotein">
    <location>
        <begin position="1"/>
        <end position="498"/>
    </location>
</feature>
<feature type="region of interest" description="Disordered" evidence="2">
    <location>
        <begin position="1"/>
        <end position="21"/>
    </location>
</feature>
<feature type="short sequence motif" description="Unconventional nuclear localization signal" evidence="1">
    <location>
        <begin position="1"/>
        <end position="18"/>
    </location>
</feature>
<feature type="short sequence motif" description="Bipartite nuclear localization signal" evidence="1">
    <location>
        <begin position="198"/>
        <end position="216"/>
    </location>
</feature>
<feature type="compositionally biased region" description="Basic and acidic residues" evidence="2">
    <location>
        <begin position="8"/>
        <end position="21"/>
    </location>
</feature>
<feature type="mutagenesis site" description="No effect on RNA-binding activity." evidence="4">
    <original>R</original>
    <variation>A</variation>
    <location>
        <position position="8"/>
    </location>
</feature>
<feature type="mutagenesis site" description="No effect on RNA-binding activity." evidence="4">
    <original>W</original>
    <variation>A</variation>
    <location>
        <position position="104"/>
    </location>
</feature>
<feature type="mutagenesis site" description="Partial loss of RNA-binding activity." evidence="4">
    <original>W</original>
    <variation>A</variation>
    <location>
        <position position="120"/>
    </location>
</feature>
<feature type="mutagenesis site" description="Partial loss of RNA-binding activity." evidence="4">
    <original>W</original>
    <variation>A</variation>
    <location>
        <position position="139"/>
    </location>
</feature>
<feature type="mutagenesis site" description="No effect on RNA-binding activity." evidence="4">
    <original>Y</original>
    <variation>A</variation>
    <location>
        <position position="148"/>
    </location>
</feature>
<feature type="mutagenesis site" description="No effect on RNA-binding activity." evidence="4">
    <original>R</original>
    <variation>A</variation>
    <location>
        <position position="150"/>
    </location>
</feature>
<feature type="mutagenesis site" description="No effect on RNA-binding activity." evidence="4">
    <original>R</original>
    <variation>A</variation>
    <location>
        <position position="156"/>
    </location>
</feature>
<feature type="mutagenesis site" description="No effect on RNA-binding activity." evidence="4">
    <original>R</original>
    <variation>A</variation>
    <location>
        <position position="175"/>
    </location>
</feature>
<feature type="mutagenesis site" description="60% loss of Homomultimerization affinity. No effect on RNA-binding activity." evidence="3 4">
    <original>R</original>
    <variation>A</variation>
    <location>
        <position position="199"/>
    </location>
</feature>
<feature type="mutagenesis site" description="No effect on RNA-binding activity." evidence="4">
    <original>R</original>
    <variation>A</variation>
    <location>
        <position position="204"/>
    </location>
</feature>
<feature type="mutagenesis site" description="No effect on RNA-binding activity." evidence="4">
    <original>W</original>
    <variation>A</variation>
    <location>
        <position position="207"/>
    </location>
</feature>
<feature type="mutagenesis site" description="No effect on RNA-binding activity." evidence="4">
    <original>R</original>
    <variation>A</variation>
    <location>
        <position position="208"/>
    </location>
</feature>
<feature type="mutagenesis site" description="No effect on RNA-binding activity." evidence="4">
    <original>R</original>
    <variation>A</variation>
    <location>
        <position position="213"/>
    </location>
</feature>
<feature type="mutagenesis site" description="Complete loss of RNA-binding activity." evidence="4">
    <original>R</original>
    <variation>A</variation>
    <location>
        <position position="267"/>
    </location>
</feature>
<feature type="mutagenesis site" description="Complete loss of RNA-binding activity." evidence="4">
    <original>W</original>
    <variation>A</variation>
    <location>
        <position position="330"/>
    </location>
</feature>
<feature type="mutagenesis site" description="No effect on RNA-binding activity." evidence="4">
    <original>W</original>
    <variation>A</variation>
    <location>
        <position position="386"/>
    </location>
</feature>
<feature type="mutagenesis site" description="No effect on RNA-binding activity." evidence="4">
    <original>R</original>
    <variation>A</variation>
    <location>
        <position position="391"/>
    </location>
</feature>
<feature type="mutagenesis site" description="Complete loss of RNA-binding activity." evidence="4">
    <original>F</original>
    <variation>A</variation>
    <location>
        <position position="412"/>
    </location>
</feature>
<feature type="mutagenesis site" description="Complete loss of Homomultimerization. Complete loss of RNA-binding activity." evidence="3 4">
    <original>R</original>
    <variation>A</variation>
    <location>
        <position position="416"/>
    </location>
</feature>
<feature type="mutagenesis site" description="2-fold increase of self association." evidence="3">
    <original>F</original>
    <variation>A</variation>
    <location>
        <position position="479"/>
    </location>
</feature>
<feature type="sequence conflict" description="In Ref. 1; CAA24268." ref="1">
    <original>H</original>
    <variation>N</variation>
    <location>
        <position position="135"/>
    </location>
</feature>
<feature type="sequence conflict" description="In Ref. 1; CAA24268." ref="1">
    <original>N</original>
    <variation>D</variation>
    <location>
        <position position="247"/>
    </location>
</feature>
<feature type="sequence conflict" description="In Ref. 1; CAA24268." ref="1">
    <original>L</original>
    <variation>V</variation>
    <location>
        <position position="353"/>
    </location>
</feature>
<feature type="sequence conflict" description="In Ref. 1; CAA24268." ref="1">
    <original>I</original>
    <variation>V</variation>
    <location>
        <position position="425"/>
    </location>
</feature>
<feature type="sequence conflict" description="In Ref. 1; CAA24268." ref="1">
    <original>N</original>
    <variation>T</variation>
    <location>
        <position position="430"/>
    </location>
</feature>
<feature type="helix" evidence="7">
    <location>
        <begin position="10"/>
        <end position="13"/>
    </location>
</feature>
<proteinExistence type="evidence at protein level"/>
<sequence>MASQGTKRSYEQMETDGERQNATEIRASVGKMIGGIGRFYIQMCTELKLSDYEGRLIQNSLTIERMVLSAFDERRNKYLEEHPSAGKDPKKTGGPIYRRVNGKWMRELILYDKEEIRRIWRQANNGDDATAGLTHMMIWHSNLNDATYQRTRALVRTGMDPRMCSLMQGSTLPRRSGAAGAAVKGVGTMVMELVRMIKRGINDRNFWRGENGRKTRIAYERMCNILKGKFQTAAQKAMMDQVRESRNPGNAEFEDLTFLARSALILRGSVAHKSCLPACVYGPAVASGYDFEREGYSLVGIDPFRLLQNSQVYSLIRPNENPAHKSQLVWMACHSAAFEDLRVLSFIKGTKVLPRGKLSTRGVQIASNENMETMESSTLELRSRYWAIRTRSGGNTNQQRASAGQISIQPTFSVQRNLPFDRTTIMAAFNGNTEGRTSDMRTEIIRMMESARPEDVSFQGRGVFELSDEKAASPIVPSFDMSNEGSYFFGDNAEEYDN</sequence>
<keyword id="KW-0002">3D-structure</keyword>
<keyword id="KW-0167">Capsid protein</keyword>
<keyword id="KW-1139">Helical capsid protein</keyword>
<keyword id="KW-1048">Host nucleus</keyword>
<keyword id="KW-0945">Host-virus interaction</keyword>
<keyword id="KW-1185">Reference proteome</keyword>
<keyword id="KW-0687">Ribonucleoprotein</keyword>
<keyword id="KW-0694">RNA-binding</keyword>
<keyword id="KW-0543">Viral nucleoprotein</keyword>
<keyword id="KW-1163">Viral penetration into host nucleus</keyword>
<keyword id="KW-0946">Virion</keyword>
<keyword id="KW-1160">Virus entry into host cell</keyword>